<dbReference type="EC" id="6.3.2.4" evidence="2"/>
<dbReference type="EMBL" id="CP001348">
    <property type="protein sequence ID" value="ACL74670.1"/>
    <property type="molecule type" value="Genomic_DNA"/>
</dbReference>
<dbReference type="RefSeq" id="WP_012634735.1">
    <property type="nucleotide sequence ID" value="NC_011898.1"/>
</dbReference>
<dbReference type="SMR" id="B8I590"/>
<dbReference type="STRING" id="394503.Ccel_0283"/>
<dbReference type="KEGG" id="cce:Ccel_0283"/>
<dbReference type="eggNOG" id="COG1181">
    <property type="taxonomic scope" value="Bacteria"/>
</dbReference>
<dbReference type="HOGENOM" id="CLU_039268_0_0_9"/>
<dbReference type="OrthoDB" id="9813261at2"/>
<dbReference type="UniPathway" id="UPA00219"/>
<dbReference type="Proteomes" id="UP000001349">
    <property type="component" value="Chromosome"/>
</dbReference>
<dbReference type="GO" id="GO:0005829">
    <property type="term" value="C:cytosol"/>
    <property type="evidence" value="ECO:0007669"/>
    <property type="project" value="TreeGrafter"/>
</dbReference>
<dbReference type="GO" id="GO:0005524">
    <property type="term" value="F:ATP binding"/>
    <property type="evidence" value="ECO:0007669"/>
    <property type="project" value="UniProtKB-KW"/>
</dbReference>
<dbReference type="GO" id="GO:0008716">
    <property type="term" value="F:D-alanine-D-alanine ligase activity"/>
    <property type="evidence" value="ECO:0007669"/>
    <property type="project" value="UniProtKB-UniRule"/>
</dbReference>
<dbReference type="GO" id="GO:0046872">
    <property type="term" value="F:metal ion binding"/>
    <property type="evidence" value="ECO:0007669"/>
    <property type="project" value="UniProtKB-KW"/>
</dbReference>
<dbReference type="GO" id="GO:0071555">
    <property type="term" value="P:cell wall organization"/>
    <property type="evidence" value="ECO:0007669"/>
    <property type="project" value="UniProtKB-KW"/>
</dbReference>
<dbReference type="GO" id="GO:0009252">
    <property type="term" value="P:peptidoglycan biosynthetic process"/>
    <property type="evidence" value="ECO:0007669"/>
    <property type="project" value="UniProtKB-UniRule"/>
</dbReference>
<dbReference type="GO" id="GO:0008360">
    <property type="term" value="P:regulation of cell shape"/>
    <property type="evidence" value="ECO:0007669"/>
    <property type="project" value="UniProtKB-KW"/>
</dbReference>
<dbReference type="FunFam" id="3.30.1490.20:FF:000007">
    <property type="entry name" value="D-alanine--D-alanine ligase"/>
    <property type="match status" value="1"/>
</dbReference>
<dbReference type="FunFam" id="3.30.470.20:FF:000008">
    <property type="entry name" value="D-alanine--D-alanine ligase"/>
    <property type="match status" value="1"/>
</dbReference>
<dbReference type="Gene3D" id="3.40.50.20">
    <property type="match status" value="1"/>
</dbReference>
<dbReference type="Gene3D" id="3.30.1490.20">
    <property type="entry name" value="ATP-grasp fold, A domain"/>
    <property type="match status" value="1"/>
</dbReference>
<dbReference type="Gene3D" id="3.30.470.20">
    <property type="entry name" value="ATP-grasp fold, B domain"/>
    <property type="match status" value="1"/>
</dbReference>
<dbReference type="HAMAP" id="MF_00047">
    <property type="entry name" value="Dala_Dala_lig"/>
    <property type="match status" value="1"/>
</dbReference>
<dbReference type="InterPro" id="IPR011761">
    <property type="entry name" value="ATP-grasp"/>
</dbReference>
<dbReference type="InterPro" id="IPR013815">
    <property type="entry name" value="ATP_grasp_subdomain_1"/>
</dbReference>
<dbReference type="InterPro" id="IPR000291">
    <property type="entry name" value="D-Ala_lig_Van_CS"/>
</dbReference>
<dbReference type="InterPro" id="IPR005905">
    <property type="entry name" value="D_ala_D_ala"/>
</dbReference>
<dbReference type="InterPro" id="IPR011095">
    <property type="entry name" value="Dala_Dala_lig_C"/>
</dbReference>
<dbReference type="InterPro" id="IPR011127">
    <property type="entry name" value="Dala_Dala_lig_N"/>
</dbReference>
<dbReference type="InterPro" id="IPR016185">
    <property type="entry name" value="PreATP-grasp_dom_sf"/>
</dbReference>
<dbReference type="NCBIfam" id="TIGR01205">
    <property type="entry name" value="D_ala_D_alaTIGR"/>
    <property type="match status" value="1"/>
</dbReference>
<dbReference type="NCBIfam" id="NF002378">
    <property type="entry name" value="PRK01372.1"/>
    <property type="match status" value="1"/>
</dbReference>
<dbReference type="NCBIfam" id="NF002528">
    <property type="entry name" value="PRK01966.1-4"/>
    <property type="match status" value="1"/>
</dbReference>
<dbReference type="PANTHER" id="PTHR23132">
    <property type="entry name" value="D-ALANINE--D-ALANINE LIGASE"/>
    <property type="match status" value="1"/>
</dbReference>
<dbReference type="PANTHER" id="PTHR23132:SF25">
    <property type="entry name" value="D-ALANINE--D-ALANINE LIGASE A"/>
    <property type="match status" value="1"/>
</dbReference>
<dbReference type="Pfam" id="PF07478">
    <property type="entry name" value="Dala_Dala_lig_C"/>
    <property type="match status" value="1"/>
</dbReference>
<dbReference type="Pfam" id="PF01820">
    <property type="entry name" value="Dala_Dala_lig_N"/>
    <property type="match status" value="1"/>
</dbReference>
<dbReference type="PIRSF" id="PIRSF039102">
    <property type="entry name" value="Ddl/VanB"/>
    <property type="match status" value="1"/>
</dbReference>
<dbReference type="SUPFAM" id="SSF56059">
    <property type="entry name" value="Glutathione synthetase ATP-binding domain-like"/>
    <property type="match status" value="1"/>
</dbReference>
<dbReference type="SUPFAM" id="SSF52440">
    <property type="entry name" value="PreATP-grasp domain"/>
    <property type="match status" value="1"/>
</dbReference>
<dbReference type="PROSITE" id="PS50975">
    <property type="entry name" value="ATP_GRASP"/>
    <property type="match status" value="1"/>
</dbReference>
<dbReference type="PROSITE" id="PS00843">
    <property type="entry name" value="DALA_DALA_LIGASE_1"/>
    <property type="match status" value="1"/>
</dbReference>
<dbReference type="PROSITE" id="PS00844">
    <property type="entry name" value="DALA_DALA_LIGASE_2"/>
    <property type="match status" value="1"/>
</dbReference>
<organism>
    <name type="scientific">Ruminiclostridium cellulolyticum (strain ATCC 35319 / DSM 5812 / JCM 6584 / H10)</name>
    <name type="common">Clostridium cellulolyticum</name>
    <dbReference type="NCBI Taxonomy" id="394503"/>
    <lineage>
        <taxon>Bacteria</taxon>
        <taxon>Bacillati</taxon>
        <taxon>Bacillota</taxon>
        <taxon>Clostridia</taxon>
        <taxon>Eubacteriales</taxon>
        <taxon>Oscillospiraceae</taxon>
        <taxon>Ruminiclostridium</taxon>
    </lineage>
</organism>
<reference key="1">
    <citation type="submission" date="2009-01" db="EMBL/GenBank/DDBJ databases">
        <title>Complete sequence of Clostridium cellulolyticum H10.</title>
        <authorList>
            <consortium name="US DOE Joint Genome Institute"/>
            <person name="Lucas S."/>
            <person name="Copeland A."/>
            <person name="Lapidus A."/>
            <person name="Glavina del Rio T."/>
            <person name="Dalin E."/>
            <person name="Tice H."/>
            <person name="Bruce D."/>
            <person name="Goodwin L."/>
            <person name="Pitluck S."/>
            <person name="Chertkov O."/>
            <person name="Saunders E."/>
            <person name="Brettin T."/>
            <person name="Detter J.C."/>
            <person name="Han C."/>
            <person name="Larimer F."/>
            <person name="Land M."/>
            <person name="Hauser L."/>
            <person name="Kyrpides N."/>
            <person name="Ivanova N."/>
            <person name="Zhou J."/>
            <person name="Richardson P."/>
        </authorList>
    </citation>
    <scope>NUCLEOTIDE SEQUENCE [LARGE SCALE GENOMIC DNA]</scope>
    <source>
        <strain>ATCC 35319 / DSM 5812 / JCM 6584 / H10</strain>
    </source>
</reference>
<name>DDL_RUMCH</name>
<feature type="chain" id="PRO_1000189732" description="D-alanine--D-alanine ligase">
    <location>
        <begin position="1"/>
        <end position="376"/>
    </location>
</feature>
<feature type="domain" description="ATP-grasp" evidence="2">
    <location>
        <begin position="150"/>
        <end position="358"/>
    </location>
</feature>
<feature type="binding site" evidence="2">
    <location>
        <begin position="183"/>
        <end position="238"/>
    </location>
    <ligand>
        <name>ATP</name>
        <dbReference type="ChEBI" id="CHEBI:30616"/>
    </ligand>
</feature>
<feature type="binding site" evidence="2">
    <location>
        <position position="311"/>
    </location>
    <ligand>
        <name>Mg(2+)</name>
        <dbReference type="ChEBI" id="CHEBI:18420"/>
        <label>1</label>
    </ligand>
</feature>
<feature type="binding site" evidence="2">
    <location>
        <position position="325"/>
    </location>
    <ligand>
        <name>Mg(2+)</name>
        <dbReference type="ChEBI" id="CHEBI:18420"/>
        <label>1</label>
    </ligand>
</feature>
<feature type="binding site" evidence="2">
    <location>
        <position position="325"/>
    </location>
    <ligand>
        <name>Mg(2+)</name>
        <dbReference type="ChEBI" id="CHEBI:18420"/>
        <label>2</label>
    </ligand>
</feature>
<feature type="binding site" evidence="2">
    <location>
        <position position="327"/>
    </location>
    <ligand>
        <name>Mg(2+)</name>
        <dbReference type="ChEBI" id="CHEBI:18420"/>
        <label>2</label>
    </ligand>
</feature>
<gene>
    <name evidence="2" type="primary">ddl</name>
    <name type="ordered locus">Ccel_0283</name>
</gene>
<proteinExistence type="inferred from homology"/>
<sequence>MSKKRVAIIFGGQSSEHEVSRVSAQSVIENIDKQKYDVEIIGITKSGQWLKYDGPVEKIGNGDWEAIAQKKPVESLSQAGISSSGITTVNSVRQIMPGNVKAPIDVIFPVLHGCNGEDGTIQGLFELAGIPYVGCGVLGSAVGMDKAYTKIIFEKEGLPQGDYLVFNRKQVYNRIEDVVAQIEGRLTYPCFVKPSNAGSSVGVNKASDRESLVKALNIAAKNDRRILVEEFINGREIECAVLGNDNPVASTVGEVVPCNDFYDYEAKYQVGDSSKVVIPAPNLSKETVEKIREYAVRAFKCLDCAGLSRVDFFVHKETGEIYINEINTLPGFTQISMYPKLWAASGIPYSELINKLIELAFERYEDTRREYTNTLD</sequence>
<protein>
    <recommendedName>
        <fullName evidence="2">D-alanine--D-alanine ligase</fullName>
        <ecNumber evidence="2">6.3.2.4</ecNumber>
    </recommendedName>
    <alternativeName>
        <fullName evidence="2">D-Ala-D-Ala ligase</fullName>
    </alternativeName>
    <alternativeName>
        <fullName evidence="2">D-alanylalanine synthetase</fullName>
    </alternativeName>
</protein>
<accession>B8I590</accession>
<keyword id="KW-0067">ATP-binding</keyword>
<keyword id="KW-0133">Cell shape</keyword>
<keyword id="KW-0961">Cell wall biogenesis/degradation</keyword>
<keyword id="KW-0963">Cytoplasm</keyword>
<keyword id="KW-0436">Ligase</keyword>
<keyword id="KW-0460">Magnesium</keyword>
<keyword id="KW-0464">Manganese</keyword>
<keyword id="KW-0479">Metal-binding</keyword>
<keyword id="KW-0547">Nucleotide-binding</keyword>
<keyword id="KW-0573">Peptidoglycan synthesis</keyword>
<keyword id="KW-1185">Reference proteome</keyword>
<evidence type="ECO:0000250" key="1"/>
<evidence type="ECO:0000255" key="2">
    <source>
        <dbReference type="HAMAP-Rule" id="MF_00047"/>
    </source>
</evidence>
<comment type="function">
    <text evidence="2">Cell wall formation.</text>
</comment>
<comment type="catalytic activity">
    <reaction evidence="2">
        <text>2 D-alanine + ATP = D-alanyl-D-alanine + ADP + phosphate + H(+)</text>
        <dbReference type="Rhea" id="RHEA:11224"/>
        <dbReference type="ChEBI" id="CHEBI:15378"/>
        <dbReference type="ChEBI" id="CHEBI:30616"/>
        <dbReference type="ChEBI" id="CHEBI:43474"/>
        <dbReference type="ChEBI" id="CHEBI:57416"/>
        <dbReference type="ChEBI" id="CHEBI:57822"/>
        <dbReference type="ChEBI" id="CHEBI:456216"/>
        <dbReference type="EC" id="6.3.2.4"/>
    </reaction>
</comment>
<comment type="cofactor">
    <cofactor evidence="1">
        <name>Mg(2+)</name>
        <dbReference type="ChEBI" id="CHEBI:18420"/>
    </cofactor>
    <cofactor evidence="1">
        <name>Mn(2+)</name>
        <dbReference type="ChEBI" id="CHEBI:29035"/>
    </cofactor>
    <text evidence="1">Binds 2 magnesium or manganese ions per subunit.</text>
</comment>
<comment type="pathway">
    <text evidence="2">Cell wall biogenesis; peptidoglycan biosynthesis.</text>
</comment>
<comment type="subcellular location">
    <subcellularLocation>
        <location evidence="2">Cytoplasm</location>
    </subcellularLocation>
</comment>
<comment type="similarity">
    <text evidence="2">Belongs to the D-alanine--D-alanine ligase family.</text>
</comment>